<organism>
    <name type="scientific">Streptococcus pyogenes serotype M12 (strain MGAS9429)</name>
    <dbReference type="NCBI Taxonomy" id="370551"/>
    <lineage>
        <taxon>Bacteria</taxon>
        <taxon>Bacillati</taxon>
        <taxon>Bacillota</taxon>
        <taxon>Bacilli</taxon>
        <taxon>Lactobacillales</taxon>
        <taxon>Streptococcaceae</taxon>
        <taxon>Streptococcus</taxon>
    </lineage>
</organism>
<sequence>MSKIIGIDLGTTNSAVAVLEGTESKIIANPEGNRTTPSVVSFKNGEIIVGDAAKRQAVTNPDTVISIKSKMGTSEKVSANGKEYTPQEISAMILQYLKGYAEDYLGEKVEKAVITVPAYFNDAQRQATKDAGKIAGLEVERIVNEPTAAALAYGMDKTDKDEKILVFDLGGGTFDVSILELGDGVFDVLATAGDNKLGGDDFDQKIIDFLVAEFKKENGIDLSQDKMALQRLKDAAEKAKKDLSGVTQTQISLPFITAGSAGPLHLEMSLSRAKFDDLTRDLVERTKTPVRQALSDARLSLSEIDEVILVGGSTRIPAVVEAVKAETGKEPNKSVNPDEVVAMGAAIQGGVITGDVKDVVLLDVTPLSLGIETMGGVFTKLIDRNTTIPTSKSQVFSTAADNQPAVDIHVLQGERPMAADNKTLGRFQLTDIPAAPRGIPQIEVTFDIDKNGIVSVKAKDLGTQKEQHIVIKSNDGLSEEEIDRMMKDAEANAEADAKRKEEVDLKNEVDQAIFATEKTIKETEGKGFDTERDAAQSALDELKAAQESGNLDDMKAKLEALNEKAQALAVKMYEQAAAAQQAAQGAEGAQANDSANNDDVVDGEFTEK</sequence>
<reference key="1">
    <citation type="journal article" date="2006" name="Proc. Natl. Acad. Sci. U.S.A.">
        <title>Molecular genetic anatomy of inter- and intraserotype variation in the human bacterial pathogen group A Streptococcus.</title>
        <authorList>
            <person name="Beres S.B."/>
            <person name="Richter E.W."/>
            <person name="Nagiec M.J."/>
            <person name="Sumby P."/>
            <person name="Porcella S.F."/>
            <person name="DeLeo F.R."/>
            <person name="Musser J.M."/>
        </authorList>
    </citation>
    <scope>NUCLEOTIDE SEQUENCE [LARGE SCALE GENOMIC DNA]</scope>
    <source>
        <strain>MGAS9429</strain>
    </source>
</reference>
<gene>
    <name evidence="1" type="primary">dnaK</name>
    <name type="ordered locus">MGAS9429_Spy1500</name>
</gene>
<dbReference type="EMBL" id="CP000259">
    <property type="protein sequence ID" value="ABF32687.1"/>
    <property type="molecule type" value="Genomic_DNA"/>
</dbReference>
<dbReference type="RefSeq" id="WP_002988586.1">
    <property type="nucleotide sequence ID" value="NC_008021.1"/>
</dbReference>
<dbReference type="SMR" id="Q1JKD6"/>
<dbReference type="KEGG" id="spk:MGAS9429_Spy1500"/>
<dbReference type="HOGENOM" id="CLU_005965_2_4_9"/>
<dbReference type="Proteomes" id="UP000002433">
    <property type="component" value="Chromosome"/>
</dbReference>
<dbReference type="GO" id="GO:0005524">
    <property type="term" value="F:ATP binding"/>
    <property type="evidence" value="ECO:0007669"/>
    <property type="project" value="UniProtKB-UniRule"/>
</dbReference>
<dbReference type="GO" id="GO:0140662">
    <property type="term" value="F:ATP-dependent protein folding chaperone"/>
    <property type="evidence" value="ECO:0007669"/>
    <property type="project" value="InterPro"/>
</dbReference>
<dbReference type="GO" id="GO:0051082">
    <property type="term" value="F:unfolded protein binding"/>
    <property type="evidence" value="ECO:0007669"/>
    <property type="project" value="InterPro"/>
</dbReference>
<dbReference type="CDD" id="cd10234">
    <property type="entry name" value="ASKHA_NBD_HSP70_DnaK-like"/>
    <property type="match status" value="1"/>
</dbReference>
<dbReference type="FunFam" id="2.60.34.10:FF:000014">
    <property type="entry name" value="Chaperone protein DnaK HSP70"/>
    <property type="match status" value="1"/>
</dbReference>
<dbReference type="FunFam" id="3.30.420.40:FF:000071">
    <property type="entry name" value="Molecular chaperone DnaK"/>
    <property type="match status" value="1"/>
</dbReference>
<dbReference type="FunFam" id="3.90.640.10:FF:000003">
    <property type="entry name" value="Molecular chaperone DnaK"/>
    <property type="match status" value="1"/>
</dbReference>
<dbReference type="Gene3D" id="1.20.1270.10">
    <property type="match status" value="1"/>
</dbReference>
<dbReference type="Gene3D" id="3.30.420.40">
    <property type="match status" value="2"/>
</dbReference>
<dbReference type="Gene3D" id="3.90.640.10">
    <property type="entry name" value="Actin, Chain A, domain 4"/>
    <property type="match status" value="1"/>
</dbReference>
<dbReference type="Gene3D" id="2.60.34.10">
    <property type="entry name" value="Substrate Binding Domain Of DNAk, Chain A, domain 1"/>
    <property type="match status" value="1"/>
</dbReference>
<dbReference type="HAMAP" id="MF_00332">
    <property type="entry name" value="DnaK"/>
    <property type="match status" value="1"/>
</dbReference>
<dbReference type="InterPro" id="IPR043129">
    <property type="entry name" value="ATPase_NBD"/>
</dbReference>
<dbReference type="InterPro" id="IPR012725">
    <property type="entry name" value="Chaperone_DnaK"/>
</dbReference>
<dbReference type="InterPro" id="IPR018181">
    <property type="entry name" value="Heat_shock_70_CS"/>
</dbReference>
<dbReference type="InterPro" id="IPR029048">
    <property type="entry name" value="HSP70_C_sf"/>
</dbReference>
<dbReference type="InterPro" id="IPR029047">
    <property type="entry name" value="HSP70_peptide-bd_sf"/>
</dbReference>
<dbReference type="InterPro" id="IPR013126">
    <property type="entry name" value="Hsp_70_fam"/>
</dbReference>
<dbReference type="NCBIfam" id="NF001413">
    <property type="entry name" value="PRK00290.1"/>
    <property type="match status" value="1"/>
</dbReference>
<dbReference type="NCBIfam" id="TIGR02350">
    <property type="entry name" value="prok_dnaK"/>
    <property type="match status" value="1"/>
</dbReference>
<dbReference type="PANTHER" id="PTHR19375">
    <property type="entry name" value="HEAT SHOCK PROTEIN 70KDA"/>
    <property type="match status" value="1"/>
</dbReference>
<dbReference type="Pfam" id="PF00012">
    <property type="entry name" value="HSP70"/>
    <property type="match status" value="1"/>
</dbReference>
<dbReference type="PRINTS" id="PR00301">
    <property type="entry name" value="HEATSHOCK70"/>
</dbReference>
<dbReference type="SUPFAM" id="SSF53067">
    <property type="entry name" value="Actin-like ATPase domain"/>
    <property type="match status" value="2"/>
</dbReference>
<dbReference type="SUPFAM" id="SSF100934">
    <property type="entry name" value="Heat shock protein 70kD (HSP70), C-terminal subdomain"/>
    <property type="match status" value="1"/>
</dbReference>
<dbReference type="SUPFAM" id="SSF100920">
    <property type="entry name" value="Heat shock protein 70kD (HSP70), peptide-binding domain"/>
    <property type="match status" value="1"/>
</dbReference>
<dbReference type="PROSITE" id="PS00297">
    <property type="entry name" value="HSP70_1"/>
    <property type="match status" value="1"/>
</dbReference>
<dbReference type="PROSITE" id="PS00329">
    <property type="entry name" value="HSP70_2"/>
    <property type="match status" value="1"/>
</dbReference>
<dbReference type="PROSITE" id="PS01036">
    <property type="entry name" value="HSP70_3"/>
    <property type="match status" value="1"/>
</dbReference>
<feature type="chain" id="PRO_1000059681" description="Chaperone protein DnaK">
    <location>
        <begin position="1"/>
        <end position="608"/>
    </location>
</feature>
<feature type="region of interest" description="Disordered" evidence="2">
    <location>
        <begin position="576"/>
        <end position="608"/>
    </location>
</feature>
<feature type="compositionally biased region" description="Low complexity" evidence="2">
    <location>
        <begin position="576"/>
        <end position="598"/>
    </location>
</feature>
<feature type="compositionally biased region" description="Acidic residues" evidence="2">
    <location>
        <begin position="599"/>
        <end position="608"/>
    </location>
</feature>
<feature type="modified residue" description="Phosphothreonine; by autocatalysis" evidence="1">
    <location>
        <position position="173"/>
    </location>
</feature>
<keyword id="KW-0067">ATP-binding</keyword>
<keyword id="KW-0143">Chaperone</keyword>
<keyword id="KW-0547">Nucleotide-binding</keyword>
<keyword id="KW-0597">Phosphoprotein</keyword>
<keyword id="KW-0346">Stress response</keyword>
<proteinExistence type="inferred from homology"/>
<accession>Q1JKD6</accession>
<evidence type="ECO:0000255" key="1">
    <source>
        <dbReference type="HAMAP-Rule" id="MF_00332"/>
    </source>
</evidence>
<evidence type="ECO:0000256" key="2">
    <source>
        <dbReference type="SAM" id="MobiDB-lite"/>
    </source>
</evidence>
<name>DNAK_STRPC</name>
<protein>
    <recommendedName>
        <fullName evidence="1">Chaperone protein DnaK</fullName>
    </recommendedName>
    <alternativeName>
        <fullName evidence="1">HSP70</fullName>
    </alternativeName>
    <alternativeName>
        <fullName evidence="1">Heat shock 70 kDa protein</fullName>
    </alternativeName>
    <alternativeName>
        <fullName evidence="1">Heat shock protein 70</fullName>
    </alternativeName>
</protein>
<comment type="function">
    <text evidence="1">Acts as a chaperone.</text>
</comment>
<comment type="induction">
    <text evidence="1">By stress conditions e.g. heat shock.</text>
</comment>
<comment type="similarity">
    <text evidence="1">Belongs to the heat shock protein 70 family.</text>
</comment>